<organism>
    <name type="scientific">Allpahuayo mammarenavirus (isolate Rat/Peru/CLHP-2472/1997)</name>
    <name type="common">ALLV</name>
    <dbReference type="NCBI Taxonomy" id="144752"/>
    <lineage>
        <taxon>Viruses</taxon>
        <taxon>Riboviria</taxon>
        <taxon>Orthornavirae</taxon>
        <taxon>Negarnaviricota</taxon>
        <taxon>Polyploviricotina</taxon>
        <taxon>Ellioviricetes</taxon>
        <taxon>Bunyavirales</taxon>
        <taxon>Arenaviridae</taxon>
        <taxon>Mammarenavirus</taxon>
    </lineage>
</organism>
<evidence type="ECO:0000250" key="1">
    <source>
        <dbReference type="UniProtKB" id="P26313"/>
    </source>
</evidence>
<evidence type="ECO:0000255" key="2">
    <source>
        <dbReference type="HAMAP-Rule" id="MF_04084"/>
    </source>
</evidence>
<feature type="initiator methionine" description="Removed; by host" evidence="2">
    <location>
        <position position="1"/>
    </location>
</feature>
<feature type="chain" id="PRO_0000361572" description="Pre-glycoprotein polyprotein GP complex" evidence="2">
    <location>
        <begin position="2"/>
        <end position="507"/>
    </location>
</feature>
<feature type="chain" id="PRO_0000361573" description="Stable signal peptide" evidence="2">
    <location>
        <begin position="2"/>
        <end position="58"/>
    </location>
</feature>
<feature type="chain" id="PRO_0000361574" description="Glycoprotein G1" evidence="2">
    <location>
        <begin position="59"/>
        <end position="272"/>
    </location>
</feature>
<feature type="chain" id="PRO_0000361575" description="Glycoprotein G2" evidence="2">
    <location>
        <begin position="273"/>
        <end position="507"/>
    </location>
</feature>
<feature type="topological domain" description="Extracellular" evidence="2">
    <location>
        <begin position="2"/>
        <end position="17"/>
    </location>
</feature>
<feature type="transmembrane region" description="Helical" evidence="2">
    <location>
        <begin position="18"/>
        <end position="33"/>
    </location>
</feature>
<feature type="topological domain" description="Cytoplasmic" evidence="2">
    <location>
        <begin position="34"/>
        <end position="58"/>
    </location>
</feature>
<feature type="topological domain" description="Extracellular" evidence="2">
    <location>
        <begin position="59"/>
        <end position="445"/>
    </location>
</feature>
<feature type="transmembrane region" description="Helical" evidence="2">
    <location>
        <begin position="446"/>
        <end position="466"/>
    </location>
</feature>
<feature type="topological domain" description="Cytoplasmic" evidence="2">
    <location>
        <begin position="467"/>
        <end position="507"/>
    </location>
</feature>
<feature type="binding site" evidence="2">
    <location>
        <position position="57"/>
    </location>
    <ligand>
        <name>Zn(2+)</name>
        <dbReference type="ChEBI" id="CHEBI:29105"/>
        <label>1</label>
    </ligand>
</feature>
<feature type="binding site" evidence="2">
    <location>
        <position position="468"/>
    </location>
    <ligand>
        <name>Zn(2+)</name>
        <dbReference type="ChEBI" id="CHEBI:29105"/>
        <label>2</label>
    </ligand>
</feature>
<feature type="binding site" evidence="2">
    <location>
        <position position="470"/>
    </location>
    <ligand>
        <name>Zn(2+)</name>
        <dbReference type="ChEBI" id="CHEBI:29105"/>
        <label>2</label>
    </ligand>
</feature>
<feature type="binding site" evidence="2">
    <location>
        <position position="476"/>
    </location>
    <ligand>
        <name>Zn(2+)</name>
        <dbReference type="ChEBI" id="CHEBI:29105"/>
        <label>2</label>
    </ligand>
</feature>
<feature type="binding site" evidence="2">
    <location>
        <position position="480"/>
    </location>
    <ligand>
        <name>Zn(2+)</name>
        <dbReference type="ChEBI" id="CHEBI:29105"/>
        <label>1</label>
    </ligand>
</feature>
<feature type="binding site" evidence="2">
    <location>
        <position position="488"/>
    </location>
    <ligand>
        <name>Zn(2+)</name>
        <dbReference type="ChEBI" id="CHEBI:29105"/>
        <label>1</label>
    </ligand>
</feature>
<feature type="binding site" evidence="2">
    <location>
        <position position="490"/>
    </location>
    <ligand>
        <name>Zn(2+)</name>
        <dbReference type="ChEBI" id="CHEBI:29105"/>
        <label>1</label>
    </ligand>
</feature>
<feature type="site" description="Important for GP-C-mediated membrane fusion" evidence="1">
    <location>
        <position position="33"/>
    </location>
</feature>
<feature type="site" description="Cleavage; by host signal peptidase" evidence="2">
    <location>
        <begin position="58"/>
        <end position="59"/>
    </location>
</feature>
<feature type="site" description="Cleavage; by host MBTPS1" evidence="2">
    <location>
        <begin position="272"/>
        <end position="273"/>
    </location>
</feature>
<feature type="lipid moiety-binding region" description="N-myristoyl glycine; by host" evidence="2">
    <location>
        <position position="2"/>
    </location>
</feature>
<feature type="glycosylation site" description="N-linked (GlcNAc...) asparagine; by host" evidence="2">
    <location>
        <position position="89"/>
    </location>
</feature>
<feature type="glycosylation site" description="N-linked (GlcNAc...) asparagine; by host" evidence="2">
    <location>
        <position position="111"/>
    </location>
</feature>
<feature type="glycosylation site" description="N-linked (GlcNAc...) asparagine; by host" evidence="2">
    <location>
        <position position="179"/>
    </location>
</feature>
<feature type="glycosylation site" description="N-linked (GlcNAc...) asparagine; by host" evidence="2">
    <location>
        <position position="240"/>
    </location>
</feature>
<feature type="glycosylation site" description="N-linked (GlcNAc...) asparagine; by host" evidence="2">
    <location>
        <position position="378"/>
    </location>
</feature>
<feature type="glycosylation site" description="N-linked (GlcNAc...) asparagine; by host" evidence="2">
    <location>
        <position position="386"/>
    </location>
</feature>
<feature type="glycosylation site" description="N-linked (GlcNAc...) asparagine; by host" evidence="2">
    <location>
        <position position="403"/>
    </location>
</feature>
<feature type="glycosylation site" description="N-linked (GlcNAc...) asparagine; by host" evidence="2">
    <location>
        <position position="408"/>
    </location>
</feature>
<feature type="disulfide bond" evidence="2">
    <location>
        <begin position="86"/>
        <end position="247"/>
    </location>
</feature>
<feature type="disulfide bond" evidence="2">
    <location>
        <begin position="292"/>
        <end position="305"/>
    </location>
</feature>
<feature type="disulfide bond" evidence="2">
    <location>
        <begin position="314"/>
        <end position="323"/>
    </location>
</feature>
<feature type="disulfide bond" evidence="2">
    <location>
        <begin position="377"/>
        <end position="398"/>
    </location>
</feature>
<gene>
    <name evidence="2" type="primary">GPC</name>
    <name type="synonym">GP-C</name>
</gene>
<protein>
    <recommendedName>
        <fullName evidence="2">Pre-glycoprotein polyprotein GP complex</fullName>
        <shortName evidence="2">Pre-GP-C</shortName>
    </recommendedName>
    <component>
        <recommendedName>
            <fullName evidence="2">Stable signal peptide</fullName>
            <shortName evidence="2">SSP</shortName>
        </recommendedName>
    </component>
    <component>
        <recommendedName>
            <fullName evidence="2">Glycoprotein G1</fullName>
            <shortName evidence="2">GP1</shortName>
        </recommendedName>
    </component>
    <component>
        <recommendedName>
            <fullName evidence="2">Glycoprotein G2</fullName>
            <shortName evidence="2">GP2</shortName>
        </recommendedName>
    </component>
</protein>
<sequence length="507" mass="57515">MGQVVTFLQSLPEVINEAINIALIAISIICILKGLVNFWKCGVVQLAIFLCLAGRKCDGLMIDRRHELSHVELNLTRMFDNLPQSCSKNNTHHYYKGPKGTTWGIELTLTNTSLDSYANMSRIRSLAFGNITNCDKTGEAGHTLKWLLNELHFNVLHVTRHVGARCRVSEGAGLLIQYNLTIGDHGGEVGRHLIASLAQIIGDNKAAWVGKCDSHCTMDGKCNYTNCEGFTHYNYLIIQNTTWENHCSYSPMSTIRMALNKVAYSSVSRQLLGFFTWDISDSSGAHVPGGYCLEQWAIVWAGIKCFDNAVMAKCNKDHNVEFCDTMRLFDFNQNAIKTLQLNVENSVNLLKRSINGLISDSLVIRNSLKQLAKIPYCNYTKFWYVNDTITGKHSLPQCWLMRNGSYLNETHFKNEWLWESQNLYNEMLLKEYEDRQGKTPIALTDICFWSLVFFTSTVFLQLVGIPTHRHLVGEGCPKPHRITSNSLCACGYYKIPKRPTRWVRKGK</sequence>
<comment type="function">
    <molecule>Stable signal peptide</molecule>
    <text evidence="2">Functions as a cleaved signal peptide that is retained as the third component of the GP complex (GP-C). Helps to stabilize the spike complex in its native conformation. The SSP is required for efficient glycoprotein expression, post-translational maturation cleavage of G1 and G2, glycoprotein transport to the cell surface plasma membrane, formation of infectious virus particles, and acid pH-dependent glycoprotein-mediated cell fusion.</text>
</comment>
<comment type="function">
    <molecule>Glycoprotein G1</molecule>
    <text evidence="2">Forms the virion spikes together with glycoprotein G2. The glycoprotein spike trimers are connected to the underlying matrix. Interacts with the host receptor leading to virus endocytosis.</text>
</comment>
<comment type="function">
    <molecule>Glycoprotein G2</molecule>
    <text evidence="2">Forms the virion spikes together with glycoprotein G1. The glycoprotein spike trimers are connected to the underlying matrix. Class I viral fusion protein that directs fusion of viral and host endosomal membranes, leading to delivery of the nucleocapsid into the cytoplasm. Membrane fusion is mediated by irreversible conformational changes induced by acidification.</text>
</comment>
<comment type="subunit">
    <molecule>Stable signal peptide</molecule>
    <text evidence="2">Interacts with glycoprotein G2. Part of the GP complex (GP-C) together with glycoprotein G1 and glycoprotein G2. The GP-complex interacts with protein Z, which interacts with ribonucleocapsid; these interactions may induce virion budding.</text>
</comment>
<comment type="subunit">
    <molecule>Glycoprotein G1</molecule>
    <text evidence="2">Homotrimer; disulfide-linked. In pre-fusion state, G1 homotrimers bind G2 homotrimers via ionic interactions. Part of the GP complex (GP-C) together with glycoprotein G2 and the stable signal peptide. The GP-complex interacts with protein Z, which interacts with ribonucleocapsid; these interactions may induce virion budding.</text>
</comment>
<comment type="subunit">
    <molecule>Glycoprotein G2</molecule>
    <text evidence="2">Homotrimer. Interacts with the stable signal peptide. In pre-fusion state, G2 homotrimers bind G1 homotrimers via ionic interactions. Part of the GP complex (GP-C) together with glycoprotein G1 and the stable signal peptide. Acidification in the endosome triggers rearrangements, which ultimately leads to a 6 helix bundle formed by the two heptad repeat domains (HR1 and HR2) in post-fusion state. The GP-complex interacts with protein Z, which interacts with ribonucleocapsid; these interactions may induce virion budding.</text>
</comment>
<comment type="subcellular location">
    <molecule>Stable signal peptide</molecule>
    <subcellularLocation>
        <location evidence="2">Virion membrane</location>
        <topology evidence="2">Single-pass type II membrane protein</topology>
    </subcellularLocation>
    <subcellularLocation>
        <location evidence="2">Host endoplasmic reticulum membrane</location>
        <topology evidence="2">Single-pass type II membrane protein</topology>
    </subcellularLocation>
    <subcellularLocation>
        <location evidence="2">Host Golgi apparatus membrane</location>
        <topology evidence="2">Single-pass type II membrane protein</topology>
    </subcellularLocation>
    <subcellularLocation>
        <location evidence="2">Host cell membrane</location>
        <topology evidence="2">Single-pass type II membrane protein</topology>
    </subcellularLocation>
</comment>
<comment type="subcellular location">
    <molecule>Glycoprotein G1</molecule>
    <subcellularLocation>
        <location evidence="2">Virion membrane</location>
        <topology evidence="2">Peripheral membrane protein</topology>
    </subcellularLocation>
    <subcellularLocation>
        <location evidence="2">Host endoplasmic reticulum membrane</location>
        <topology evidence="2">Peripheral membrane protein</topology>
    </subcellularLocation>
    <subcellularLocation>
        <location evidence="2">Host Golgi apparatus membrane</location>
        <topology evidence="2">Peripheral membrane protein</topology>
    </subcellularLocation>
    <subcellularLocation>
        <location evidence="2">Host cell membrane</location>
        <topology evidence="2">Peripheral membrane protein</topology>
    </subcellularLocation>
</comment>
<comment type="subcellular location">
    <molecule>Glycoprotein G2</molecule>
    <subcellularLocation>
        <location evidence="2">Virion membrane</location>
        <topology evidence="2">Single-pass membrane protein</topology>
    </subcellularLocation>
    <subcellularLocation>
        <location evidence="2">Host endoplasmic reticulum membrane</location>
        <topology evidence="2">Single-pass membrane protein</topology>
    </subcellularLocation>
    <subcellularLocation>
        <location evidence="2">Host Golgi apparatus membrane</location>
        <topology evidence="2">Single-pass membrane protein</topology>
    </subcellularLocation>
    <subcellularLocation>
        <location evidence="2">Host cell membrane</location>
        <topology evidence="2">Single-pass membrane protein</topology>
    </subcellularLocation>
    <text evidence="2">Binding to the stable signal peptide masks endogenous ER localization signals in the cytoplasmic domain of G2 to ensure that only the fully assembled, tripartite GP complex is transported for virion assembly.</text>
</comment>
<comment type="domain">
    <molecule>Stable signal peptide</molecule>
    <text evidence="2">The N-terminus is localized at the extracellular side of the GP-C, with a part embedded in the membrane probably.</text>
</comment>
<comment type="domain">
    <molecule>Glycoprotein G2</molecule>
    <text evidence="2">Contains 1 fusion peptide at the N-terminus, 2 heptad repeats domains HR1 and HR2 and, at the C-terminus, a cytoplasmic domain that plays a role in ER location. Also contains a zinc-binding domain that allows SSP retention in the GPC complex by accepting a cysteine from SSP as the fourth ligand.</text>
</comment>
<comment type="PTM">
    <molecule>Pre-glycoprotein polyprotein GP complex</molecule>
    <text evidence="2">Specific enzymatic cleavages in vivo yield mature proteins. GP-C polyprotein is cleaved in the endoplasmic reticulum by the host protease MBTPS1. Only cleaved glycoprotein is incorporated into virions.</text>
</comment>
<comment type="PTM">
    <molecule>Stable signal peptide</molecule>
    <text evidence="2">The SSP remains stably associated with the GP complex following cleavage by signal peptidase and plays crucial roles in the trafficking of GP through the secretory pathway.</text>
</comment>
<comment type="PTM">
    <molecule>Stable signal peptide</molecule>
    <text evidence="2">Myristoylation is necessary for GP2-mediated fusion activity.</text>
</comment>
<comment type="similarity">
    <text evidence="2">Belongs to the arenaviridae GPC protein family.</text>
</comment>
<accession>Q9DK03</accession>
<reference key="1">
    <citation type="journal article" date="2001" name="Virology">
        <title>Allpahuayo virus: a newly recognized arenavirus (arenaviridae) from arboreal rice rats (oecomys bicolor and oecomys paricola) in northeastern peru.</title>
        <authorList>
            <person name="Moncayo A.C."/>
            <person name="Hice C.L."/>
            <person name="Watts D.M."/>
            <person name="Travassos de Rosa A.P."/>
            <person name="Guzman H."/>
            <person name="Russell K.L."/>
            <person name="Calampa C."/>
            <person name="Gozalo A."/>
            <person name="Popov V.L."/>
            <person name="Weaver S.C."/>
            <person name="Tesh R.B."/>
        </authorList>
    </citation>
    <scope>NUCLEOTIDE SEQUENCE [GENOMIC RNA]</scope>
</reference>
<proteinExistence type="inferred from homology"/>
<name>GLYC_ALLVP</name>
<organismHost>
    <name type="scientific">Oecomys bicolor</name>
    <name type="common">Bicolored arboreal rice rat</name>
    <dbReference type="NCBI Taxonomy" id="48011"/>
</organismHost>
<organismHost>
    <name type="scientific">Oecomys roberti</name>
    <name type="common">Robert's arboreal rice rat</name>
    <dbReference type="NCBI Taxonomy" id="48012"/>
</organismHost>
<dbReference type="EMBL" id="AY012687">
    <property type="protein sequence ID" value="AAG42531.1"/>
    <property type="molecule type" value="Genomic_RNA"/>
</dbReference>
<dbReference type="RefSeq" id="YP_001649221.1">
    <property type="nucleotide sequence ID" value="NC_010253.1"/>
</dbReference>
<dbReference type="SMR" id="Q9DK03"/>
<dbReference type="GlyCosmos" id="Q9DK03">
    <property type="glycosylation" value="12 sites, No reported glycans"/>
</dbReference>
<dbReference type="GeneID" id="5848530"/>
<dbReference type="KEGG" id="vg:5848530"/>
<dbReference type="OrthoDB" id="4838at10239"/>
<dbReference type="Proteomes" id="UP000009258">
    <property type="component" value="Genome"/>
</dbReference>
<dbReference type="GO" id="GO:0044167">
    <property type="term" value="C:host cell endoplasmic reticulum membrane"/>
    <property type="evidence" value="ECO:0007669"/>
    <property type="project" value="UniProtKB-SubCell"/>
</dbReference>
<dbReference type="GO" id="GO:0044178">
    <property type="term" value="C:host cell Golgi membrane"/>
    <property type="evidence" value="ECO:0007669"/>
    <property type="project" value="UniProtKB-SubCell"/>
</dbReference>
<dbReference type="GO" id="GO:0020002">
    <property type="term" value="C:host cell plasma membrane"/>
    <property type="evidence" value="ECO:0007669"/>
    <property type="project" value="UniProtKB-SubCell"/>
</dbReference>
<dbReference type="GO" id="GO:0016020">
    <property type="term" value="C:membrane"/>
    <property type="evidence" value="ECO:0007669"/>
    <property type="project" value="UniProtKB-UniRule"/>
</dbReference>
<dbReference type="GO" id="GO:0019031">
    <property type="term" value="C:viral envelope"/>
    <property type="evidence" value="ECO:0007669"/>
    <property type="project" value="UniProtKB-UniRule"/>
</dbReference>
<dbReference type="GO" id="GO:0055036">
    <property type="term" value="C:virion membrane"/>
    <property type="evidence" value="ECO:0007669"/>
    <property type="project" value="UniProtKB-SubCell"/>
</dbReference>
<dbReference type="GO" id="GO:0046872">
    <property type="term" value="F:metal ion binding"/>
    <property type="evidence" value="ECO:0007669"/>
    <property type="project" value="UniProtKB-KW"/>
</dbReference>
<dbReference type="GO" id="GO:0039654">
    <property type="term" value="P:fusion of virus membrane with host endosome membrane"/>
    <property type="evidence" value="ECO:0007669"/>
    <property type="project" value="UniProtKB-UniRule"/>
</dbReference>
<dbReference type="GO" id="GO:0019065">
    <property type="term" value="P:receptor-mediated endocytosis of virus by host cell"/>
    <property type="evidence" value="ECO:0007669"/>
    <property type="project" value="UniProtKB-UniRule"/>
</dbReference>
<dbReference type="GO" id="GO:0019062">
    <property type="term" value="P:virion attachment to host cell"/>
    <property type="evidence" value="ECO:0007669"/>
    <property type="project" value="UniProtKB-UniRule"/>
</dbReference>
<dbReference type="Gene3D" id="6.10.140.1590">
    <property type="match status" value="1"/>
</dbReference>
<dbReference type="Gene3D" id="2.20.28.180">
    <property type="entry name" value="Arenavirus glycoprotein, zinc binding domain"/>
    <property type="match status" value="1"/>
</dbReference>
<dbReference type="HAMAP" id="MF_04084">
    <property type="entry name" value="ARENA_GPC"/>
    <property type="match status" value="1"/>
</dbReference>
<dbReference type="InterPro" id="IPR001535">
    <property type="entry name" value="Arena_glycoprot"/>
</dbReference>
<dbReference type="InterPro" id="IPR043015">
    <property type="entry name" value="Arena_glycoprot_zinc-bd"/>
</dbReference>
<dbReference type="Pfam" id="PF00798">
    <property type="entry name" value="Arena_glycoprot"/>
    <property type="match status" value="1"/>
</dbReference>
<dbReference type="PIRSF" id="PIRSF004028">
    <property type="entry name" value="GPC_ArenaV"/>
    <property type="match status" value="1"/>
</dbReference>
<keyword id="KW-1015">Disulfide bond</keyword>
<keyword id="KW-1170">Fusion of virus membrane with host endosomal membrane</keyword>
<keyword id="KW-1168">Fusion of virus membrane with host membrane</keyword>
<keyword id="KW-0325">Glycoprotein</keyword>
<keyword id="KW-1032">Host cell membrane</keyword>
<keyword id="KW-1038">Host endoplasmic reticulum</keyword>
<keyword id="KW-1040">Host Golgi apparatus</keyword>
<keyword id="KW-1043">Host membrane</keyword>
<keyword id="KW-0945">Host-virus interaction</keyword>
<keyword id="KW-0449">Lipoprotein</keyword>
<keyword id="KW-0472">Membrane</keyword>
<keyword id="KW-0479">Metal-binding</keyword>
<keyword id="KW-0519">Myristate</keyword>
<keyword id="KW-0812">Transmembrane</keyword>
<keyword id="KW-1133">Transmembrane helix</keyword>
<keyword id="KW-1161">Viral attachment to host cell</keyword>
<keyword id="KW-0261">Viral envelope protein</keyword>
<keyword id="KW-1162">Viral penetration into host cytoplasm</keyword>
<keyword id="KW-0946">Virion</keyword>
<keyword id="KW-1164">Virus endocytosis by host</keyword>
<keyword id="KW-1160">Virus entry into host cell</keyword>
<keyword id="KW-0862">Zinc</keyword>